<organism>
    <name type="scientific">Streptococcus pyogenes serotype M2 (strain MGAS10270)</name>
    <dbReference type="NCBI Taxonomy" id="370552"/>
    <lineage>
        <taxon>Bacteria</taxon>
        <taxon>Bacillati</taxon>
        <taxon>Bacillota</taxon>
        <taxon>Bacilli</taxon>
        <taxon>Lactobacillales</taxon>
        <taxon>Streptococcaceae</taxon>
        <taxon>Streptococcus</taxon>
    </lineage>
</organism>
<name>RS17_STRPD</name>
<evidence type="ECO:0000255" key="1">
    <source>
        <dbReference type="HAMAP-Rule" id="MF_01345"/>
    </source>
</evidence>
<evidence type="ECO:0000305" key="2"/>
<reference key="1">
    <citation type="journal article" date="2006" name="Proc. Natl. Acad. Sci. U.S.A.">
        <title>Molecular genetic anatomy of inter- and intraserotype variation in the human bacterial pathogen group A Streptococcus.</title>
        <authorList>
            <person name="Beres S.B."/>
            <person name="Richter E.W."/>
            <person name="Nagiec M.J."/>
            <person name="Sumby P."/>
            <person name="Porcella S.F."/>
            <person name="DeLeo F.R."/>
            <person name="Musser J.M."/>
        </authorList>
    </citation>
    <scope>NUCLEOTIDE SEQUENCE [LARGE SCALE GENOMIC DNA]</scope>
    <source>
        <strain>MGAS10270</strain>
    </source>
</reference>
<comment type="function">
    <text evidence="1">One of the primary rRNA binding proteins, it binds specifically to the 5'-end of 16S ribosomal RNA.</text>
</comment>
<comment type="subunit">
    <text evidence="1">Part of the 30S ribosomal subunit.</text>
</comment>
<comment type="similarity">
    <text evidence="1">Belongs to the universal ribosomal protein uS17 family.</text>
</comment>
<dbReference type="EMBL" id="CP000260">
    <property type="protein sequence ID" value="ABF33120.1"/>
    <property type="molecule type" value="Genomic_DNA"/>
</dbReference>
<dbReference type="SMR" id="Q1JJ53"/>
<dbReference type="KEGG" id="sph:MGAS10270_Spy0055"/>
<dbReference type="HOGENOM" id="CLU_073626_1_0_9"/>
<dbReference type="Proteomes" id="UP000002436">
    <property type="component" value="Chromosome"/>
</dbReference>
<dbReference type="GO" id="GO:0022627">
    <property type="term" value="C:cytosolic small ribosomal subunit"/>
    <property type="evidence" value="ECO:0007669"/>
    <property type="project" value="TreeGrafter"/>
</dbReference>
<dbReference type="GO" id="GO:0019843">
    <property type="term" value="F:rRNA binding"/>
    <property type="evidence" value="ECO:0007669"/>
    <property type="project" value="UniProtKB-UniRule"/>
</dbReference>
<dbReference type="GO" id="GO:0003735">
    <property type="term" value="F:structural constituent of ribosome"/>
    <property type="evidence" value="ECO:0007669"/>
    <property type="project" value="InterPro"/>
</dbReference>
<dbReference type="GO" id="GO:0006412">
    <property type="term" value="P:translation"/>
    <property type="evidence" value="ECO:0007669"/>
    <property type="project" value="UniProtKB-UniRule"/>
</dbReference>
<dbReference type="CDD" id="cd00364">
    <property type="entry name" value="Ribosomal_uS17"/>
    <property type="match status" value="1"/>
</dbReference>
<dbReference type="FunFam" id="2.40.50.140:FF:000026">
    <property type="entry name" value="30S ribosomal protein S17"/>
    <property type="match status" value="1"/>
</dbReference>
<dbReference type="Gene3D" id="2.40.50.140">
    <property type="entry name" value="Nucleic acid-binding proteins"/>
    <property type="match status" value="1"/>
</dbReference>
<dbReference type="HAMAP" id="MF_01345_B">
    <property type="entry name" value="Ribosomal_uS17_B"/>
    <property type="match status" value="1"/>
</dbReference>
<dbReference type="InterPro" id="IPR012340">
    <property type="entry name" value="NA-bd_OB-fold"/>
</dbReference>
<dbReference type="InterPro" id="IPR000266">
    <property type="entry name" value="Ribosomal_uS17"/>
</dbReference>
<dbReference type="InterPro" id="IPR019984">
    <property type="entry name" value="Ribosomal_uS17_bact/chlr"/>
</dbReference>
<dbReference type="InterPro" id="IPR019979">
    <property type="entry name" value="Ribosomal_uS17_CS"/>
</dbReference>
<dbReference type="NCBIfam" id="NF004123">
    <property type="entry name" value="PRK05610.1"/>
    <property type="match status" value="1"/>
</dbReference>
<dbReference type="NCBIfam" id="TIGR03635">
    <property type="entry name" value="uS17_bact"/>
    <property type="match status" value="1"/>
</dbReference>
<dbReference type="PANTHER" id="PTHR10744">
    <property type="entry name" value="40S RIBOSOMAL PROTEIN S11 FAMILY MEMBER"/>
    <property type="match status" value="1"/>
</dbReference>
<dbReference type="PANTHER" id="PTHR10744:SF1">
    <property type="entry name" value="SMALL RIBOSOMAL SUBUNIT PROTEIN US17M"/>
    <property type="match status" value="1"/>
</dbReference>
<dbReference type="Pfam" id="PF00366">
    <property type="entry name" value="Ribosomal_S17"/>
    <property type="match status" value="1"/>
</dbReference>
<dbReference type="PRINTS" id="PR00973">
    <property type="entry name" value="RIBOSOMALS17"/>
</dbReference>
<dbReference type="SUPFAM" id="SSF50249">
    <property type="entry name" value="Nucleic acid-binding proteins"/>
    <property type="match status" value="1"/>
</dbReference>
<dbReference type="PROSITE" id="PS00056">
    <property type="entry name" value="RIBOSOMAL_S17"/>
    <property type="match status" value="1"/>
</dbReference>
<accession>Q1JJ53</accession>
<keyword id="KW-0687">Ribonucleoprotein</keyword>
<keyword id="KW-0689">Ribosomal protein</keyword>
<keyword id="KW-0694">RNA-binding</keyword>
<keyword id="KW-0699">rRNA-binding</keyword>
<protein>
    <recommendedName>
        <fullName evidence="1">Small ribosomal subunit protein uS17</fullName>
    </recommendedName>
    <alternativeName>
        <fullName evidence="2">30S ribosomal protein S17</fullName>
    </alternativeName>
</protein>
<feature type="chain" id="PRO_0000255706" description="Small ribosomal subunit protein uS17">
    <location>
        <begin position="1"/>
        <end position="86"/>
    </location>
</feature>
<gene>
    <name evidence="1" type="primary">rpsQ</name>
    <name type="ordered locus">MGAS10270_Spy0055</name>
</gene>
<proteinExistence type="inferred from homology"/>
<sequence length="86" mass="10090">MERNQRKTLYGRVVSDKMDKTITVVVETKRNHPVYGKRINYSKKYKAHDENNVAKEGDIVRIMETRPLSATKRFRLVEVVEKAVII</sequence>